<evidence type="ECO:0000305" key="1"/>
<reference key="1">
    <citation type="submission" date="2005-04" db="EMBL/GenBank/DDBJ databases">
        <authorList>
            <consortium name="NIH - Zebrafish Gene Collection (ZGC) project"/>
        </authorList>
    </citation>
    <scope>NUCLEOTIDE SEQUENCE [LARGE SCALE MRNA]</scope>
    <source>
        <tissue>Larva</tissue>
    </source>
</reference>
<gene>
    <name type="ORF">zgc:112163</name>
</gene>
<sequence>MVASSPETLISAAQKCLCSRKKRLSPSSCLEVTIHIIAVDLGVKPALLYDSNGASPDQLQLYLHSLQESSVVSNSLRIMSINDNTFIINPDIMKSHLGELLKSKSLPLIDVCSSRKRPVLCAFERSAEEMVRSFLEVFMNGLDLVVLEEELYKDWNLCTFFGILLGYPASYWFEQTQGFENCLSMTPLVVCTVWVRWQIHEIKQRCCLYSFSVPEELWSDVQSHIQRWTDHLRERFSKQTVLTDICFSRDTVTLPSVTL</sequence>
<protein>
    <recommendedName>
        <fullName>UPF0739 protein C1orf74 homolog</fullName>
    </recommendedName>
</protein>
<comment type="similarity">
    <text evidence="1">Belongs to the UPF0739 family.</text>
</comment>
<name>CA074_DANRE</name>
<feature type="chain" id="PRO_0000271096" description="UPF0739 protein C1orf74 homolog">
    <location>
        <begin position="1"/>
        <end position="259"/>
    </location>
</feature>
<keyword id="KW-1185">Reference proteome</keyword>
<accession>Q567C3</accession>
<organism>
    <name type="scientific">Danio rerio</name>
    <name type="common">Zebrafish</name>
    <name type="synonym">Brachydanio rerio</name>
    <dbReference type="NCBI Taxonomy" id="7955"/>
    <lineage>
        <taxon>Eukaryota</taxon>
        <taxon>Metazoa</taxon>
        <taxon>Chordata</taxon>
        <taxon>Craniata</taxon>
        <taxon>Vertebrata</taxon>
        <taxon>Euteleostomi</taxon>
        <taxon>Actinopterygii</taxon>
        <taxon>Neopterygii</taxon>
        <taxon>Teleostei</taxon>
        <taxon>Ostariophysi</taxon>
        <taxon>Cypriniformes</taxon>
        <taxon>Danionidae</taxon>
        <taxon>Danioninae</taxon>
        <taxon>Danio</taxon>
    </lineage>
</organism>
<dbReference type="EMBL" id="BC093235">
    <property type="protein sequence ID" value="AAH93235.1"/>
    <property type="molecule type" value="mRNA"/>
</dbReference>
<dbReference type="RefSeq" id="NP_001017723.1">
    <property type="nucleotide sequence ID" value="NM_001017723.1"/>
</dbReference>
<dbReference type="FunCoup" id="Q567C3">
    <property type="interactions" value="1139"/>
</dbReference>
<dbReference type="STRING" id="7955.ENSDARP00000012989"/>
<dbReference type="PaxDb" id="7955-ENSDARP00000012989"/>
<dbReference type="Ensembl" id="ENSDART00000004295">
    <property type="protein sequence ID" value="ENSDARP00000012989"/>
    <property type="gene ID" value="ENSDARG00000017657"/>
</dbReference>
<dbReference type="GeneID" id="550418"/>
<dbReference type="KEGG" id="dre:550418"/>
<dbReference type="AGR" id="ZFIN:ZDB-GENE-050417-227"/>
<dbReference type="ZFIN" id="ZDB-GENE-050417-227">
    <property type="gene designation" value="zgc:112163"/>
</dbReference>
<dbReference type="eggNOG" id="ENOG502RZ46">
    <property type="taxonomic scope" value="Eukaryota"/>
</dbReference>
<dbReference type="HOGENOM" id="CLU_1156081_0_0_1"/>
<dbReference type="InParanoid" id="Q567C3"/>
<dbReference type="OMA" id="YPVTYWF"/>
<dbReference type="OrthoDB" id="10056365at2759"/>
<dbReference type="PhylomeDB" id="Q567C3"/>
<dbReference type="TreeFam" id="TF328609"/>
<dbReference type="PRO" id="PR:Q567C3"/>
<dbReference type="Proteomes" id="UP000000437">
    <property type="component" value="Chromosome 6"/>
</dbReference>
<dbReference type="Bgee" id="ENSDARG00000017657">
    <property type="expression patterns" value="Expressed in ovary and 19 other cell types or tissues"/>
</dbReference>
<dbReference type="InterPro" id="IPR027850">
    <property type="entry name" value="DUF4504"/>
</dbReference>
<dbReference type="PANTHER" id="PTHR31366">
    <property type="entry name" value="UPF0739 PROTEIN C1ORF74"/>
    <property type="match status" value="1"/>
</dbReference>
<dbReference type="PANTHER" id="PTHR31366:SF2">
    <property type="entry name" value="UPF0739 PROTEIN C1ORF74"/>
    <property type="match status" value="1"/>
</dbReference>
<dbReference type="Pfam" id="PF14953">
    <property type="entry name" value="DUF4504"/>
    <property type="match status" value="1"/>
</dbReference>
<proteinExistence type="evidence at transcript level"/>